<keyword id="KW-0903">Direct protein sequencing</keyword>
<keyword id="KW-0872">Ion channel impairing toxin</keyword>
<keyword id="KW-0528">Neurotoxin</keyword>
<keyword id="KW-0632">Potassium channel impairing toxin</keyword>
<keyword id="KW-0964">Secreted</keyword>
<keyword id="KW-0800">Toxin</keyword>
<keyword id="KW-1220">Voltage-gated potassium channel impairing toxin</keyword>
<proteinExistence type="evidence at protein level"/>
<comment type="function">
    <text evidence="1">Potent selective inhibitor of Kv1/KCNA voltage-gated potassium channels.</text>
</comment>
<comment type="subcellular location">
    <subcellularLocation>
        <location evidence="2">Secreted</location>
    </subcellularLocation>
</comment>
<comment type="tissue specificity">
    <text evidence="5">Expressed by the venom gland.</text>
</comment>
<comment type="domain">
    <text evidence="4">Has the structural arrangement of an alpha-helix connected to antiparallel beta-sheets by disulfide bonds (CS-alpha/beta).</text>
</comment>
<comment type="similarity">
    <text evidence="4">Belongs to the short scorpion toxin superfamily. Potassium channel inhibitor family. Alpha-KTx 02 subfamily.</text>
</comment>
<reference key="1">
    <citation type="journal article" date="1998" name="J. Biol. Chem.">
        <title>Subunit composition of brain voltage-gated potassium channels determined by hongotoxin-1, a novel peptide derived from Centruroides limbatus venom.</title>
        <authorList>
            <person name="Koschak A."/>
            <person name="Bugianesi R.M."/>
            <person name="Mitterdorfer J."/>
            <person name="Kaczorowski G.J."/>
            <person name="Garcia M.L."/>
            <person name="Knaus H.-G."/>
        </authorList>
    </citation>
    <scope>PROTEIN SEQUENCE</scope>
    <scope>SUBCELLULAR LOCATION</scope>
</reference>
<protein>
    <recommendedName>
        <fullName evidence="3">Hongotoxin-5</fullName>
        <shortName evidence="3">HgTX5</shortName>
    </recommendedName>
    <alternativeName>
        <fullName evidence="4">Potassium channel toxin alpha-KTx 02</fullName>
    </alternativeName>
</protein>
<feature type="chain" id="PRO_0000066836" description="Hongotoxin-5">
    <location>
        <begin position="1"/>
        <end position="20" status="greater than"/>
    </location>
</feature>
<feature type="non-terminal residue">
    <location>
        <position position="20"/>
    </location>
</feature>
<evidence type="ECO:0000250" key="1"/>
<evidence type="ECO:0000269" key="2">
    <source>
    </source>
</evidence>
<evidence type="ECO:0000303" key="3">
    <source>
    </source>
</evidence>
<evidence type="ECO:0000305" key="4"/>
<evidence type="ECO:0000305" key="5">
    <source>
    </source>
</evidence>
<sequence>TVIDVKCTSPKQCLPPCAKQ</sequence>
<accession>P59851</accession>
<dbReference type="GO" id="GO:0005576">
    <property type="term" value="C:extracellular region"/>
    <property type="evidence" value="ECO:0007669"/>
    <property type="project" value="UniProtKB-SubCell"/>
</dbReference>
<dbReference type="GO" id="GO:0015459">
    <property type="term" value="F:potassium channel regulator activity"/>
    <property type="evidence" value="ECO:0007669"/>
    <property type="project" value="UniProtKB-KW"/>
</dbReference>
<dbReference type="GO" id="GO:0090729">
    <property type="term" value="F:toxin activity"/>
    <property type="evidence" value="ECO:0007669"/>
    <property type="project" value="UniProtKB-KW"/>
</dbReference>
<dbReference type="Gene3D" id="3.30.30.10">
    <property type="entry name" value="Knottin, scorpion toxin-like"/>
    <property type="match status" value="1"/>
</dbReference>
<dbReference type="InterPro" id="IPR036574">
    <property type="entry name" value="Scorpion_toxin-like_sf"/>
</dbReference>
<dbReference type="SUPFAM" id="SSF57095">
    <property type="entry name" value="Scorpion toxin-like"/>
    <property type="match status" value="1"/>
</dbReference>
<name>KAX2Z_CENLM</name>
<organism>
    <name type="scientific">Centruroides limbatus</name>
    <name type="common">Bark scorpion</name>
    <dbReference type="NCBI Taxonomy" id="244936"/>
    <lineage>
        <taxon>Eukaryota</taxon>
        <taxon>Metazoa</taxon>
        <taxon>Ecdysozoa</taxon>
        <taxon>Arthropoda</taxon>
        <taxon>Chelicerata</taxon>
        <taxon>Arachnida</taxon>
        <taxon>Scorpiones</taxon>
        <taxon>Buthida</taxon>
        <taxon>Buthoidea</taxon>
        <taxon>Buthidae</taxon>
        <taxon>Centruroides</taxon>
    </lineage>
</organism>